<sequence length="432" mass="46892">MRKIKGLRWYMIALVTLGTVLGYLTRNTVAAAAPTLMEELNISTQQYSYIIAAYSAAYTVMQPVAGYVLDVLGTKIGYAMFAVLWAVFCGATALAGSWGGLAVARGAVGAAEAAMIPAGLKASSEWFPAKERSIAVGYFNVGSSIGAMIAPPLVVWAIVMHSWQMAFIISGALSFIWAMAWLIFYKHPRDQKHLTDEERDYIINGQEAQHQVSTAKKMSVGQILRNRQFWGIALPRFLAEPAWGTFNAWIPLFMFKVYGFNLKEIAMFAWMPMLFADLGCILGGYLPPLFQRWFGVNLIVSRKMVVTLGAVLMIGPGMIGLFTNPYVAIMLLCIGGFAHQALSGALITLSSDVFGRNEVATANGLTGMSAWLASTLFALVVGALADTIGFSPLFAVLAVFDLLGALVIWTVLQNKPAIEVAQETHNDPAPQH</sequence>
<organism>
    <name type="scientific">Escherichia coli (strain K12)</name>
    <dbReference type="NCBI Taxonomy" id="83333"/>
    <lineage>
        <taxon>Bacteria</taxon>
        <taxon>Pseudomonadati</taxon>
        <taxon>Pseudomonadota</taxon>
        <taxon>Gammaproteobacteria</taxon>
        <taxon>Enterobacterales</taxon>
        <taxon>Enterobacteriaceae</taxon>
        <taxon>Escherichia</taxon>
    </lineage>
</organism>
<name>EXUT_ECOLI</name>
<dbReference type="EMBL" id="D13328">
    <property type="protein sequence ID" value="BAA02588.1"/>
    <property type="status" value="ALT_INIT"/>
    <property type="molecule type" value="Genomic_DNA"/>
</dbReference>
<dbReference type="EMBL" id="U18997">
    <property type="protein sequence ID" value="AAA57897.1"/>
    <property type="status" value="ALT_INIT"/>
    <property type="molecule type" value="Genomic_DNA"/>
</dbReference>
<dbReference type="EMBL" id="U00096">
    <property type="protein sequence ID" value="AAC76128.2"/>
    <property type="molecule type" value="Genomic_DNA"/>
</dbReference>
<dbReference type="EMBL" id="AP009048">
    <property type="protein sequence ID" value="BAE77143.1"/>
    <property type="status" value="ALT_INIT"/>
    <property type="molecule type" value="Genomic_DNA"/>
</dbReference>
<dbReference type="PIR" id="B65098">
    <property type="entry name" value="B65098"/>
</dbReference>
<dbReference type="RefSeq" id="NP_417564.2">
    <property type="nucleotide sequence ID" value="NC_000913.3"/>
</dbReference>
<dbReference type="RefSeq" id="WP_001226465.1">
    <property type="nucleotide sequence ID" value="NZ_LN832404.1"/>
</dbReference>
<dbReference type="SMR" id="P0AA78"/>
<dbReference type="BioGRID" id="4262409">
    <property type="interactions" value="14"/>
</dbReference>
<dbReference type="FunCoup" id="P0AA78">
    <property type="interactions" value="81"/>
</dbReference>
<dbReference type="STRING" id="511145.b3093"/>
<dbReference type="TCDB" id="2.A.1.14.2">
    <property type="family name" value="the major facilitator superfamily (mfs)"/>
</dbReference>
<dbReference type="PaxDb" id="511145-b3093"/>
<dbReference type="EnsemblBacteria" id="AAC76128">
    <property type="protein sequence ID" value="AAC76128"/>
    <property type="gene ID" value="b3093"/>
</dbReference>
<dbReference type="GeneID" id="947601"/>
<dbReference type="KEGG" id="ecj:JW3064"/>
<dbReference type="KEGG" id="eco:b3093"/>
<dbReference type="KEGG" id="ecoc:C3026_16890"/>
<dbReference type="PATRIC" id="fig|511145.12.peg.3188"/>
<dbReference type="EchoBASE" id="EB2594"/>
<dbReference type="eggNOG" id="COG2271">
    <property type="taxonomic scope" value="Bacteria"/>
</dbReference>
<dbReference type="HOGENOM" id="CLU_001265_5_1_6"/>
<dbReference type="InParanoid" id="P0AA78"/>
<dbReference type="OMA" id="FYKHPKD"/>
<dbReference type="OrthoDB" id="9781156at2"/>
<dbReference type="BioCyc" id="EcoCyc:EXUT-MONOMER"/>
<dbReference type="BioCyc" id="MetaCyc:EXUT-MONOMER"/>
<dbReference type="PRO" id="PR:P0AA78"/>
<dbReference type="Proteomes" id="UP000000625">
    <property type="component" value="Chromosome"/>
</dbReference>
<dbReference type="GO" id="GO:0005886">
    <property type="term" value="C:plasma membrane"/>
    <property type="evidence" value="ECO:0000314"/>
    <property type="project" value="EcoCyc"/>
</dbReference>
<dbReference type="GO" id="GO:0015134">
    <property type="term" value="F:hexuronate transmembrane transporter activity"/>
    <property type="evidence" value="ECO:0000315"/>
    <property type="project" value="EcoCyc"/>
</dbReference>
<dbReference type="GO" id="GO:0015736">
    <property type="term" value="P:hexuronate transmembrane transport"/>
    <property type="evidence" value="ECO:0000315"/>
    <property type="project" value="EcoCyc"/>
</dbReference>
<dbReference type="CDD" id="cd17319">
    <property type="entry name" value="MFS_ExuT_GudP_like"/>
    <property type="match status" value="1"/>
</dbReference>
<dbReference type="FunFam" id="1.20.1250.20:FF:000036">
    <property type="entry name" value="Hexuronate transporter"/>
    <property type="match status" value="1"/>
</dbReference>
<dbReference type="FunFam" id="1.20.1250.20:FF:000173">
    <property type="entry name" value="Hexuronate transporter"/>
    <property type="match status" value="1"/>
</dbReference>
<dbReference type="Gene3D" id="1.20.1250.20">
    <property type="entry name" value="MFS general substrate transporter like domains"/>
    <property type="match status" value="2"/>
</dbReference>
<dbReference type="InterPro" id="IPR011701">
    <property type="entry name" value="MFS"/>
</dbReference>
<dbReference type="InterPro" id="IPR020846">
    <property type="entry name" value="MFS_dom"/>
</dbReference>
<dbReference type="InterPro" id="IPR050382">
    <property type="entry name" value="MFS_Na/Anion_cotransporter"/>
</dbReference>
<dbReference type="InterPro" id="IPR036259">
    <property type="entry name" value="MFS_trans_sf"/>
</dbReference>
<dbReference type="NCBIfam" id="TIGR00893">
    <property type="entry name" value="2A0114"/>
    <property type="match status" value="1"/>
</dbReference>
<dbReference type="PANTHER" id="PTHR11662:SF285">
    <property type="entry name" value="HEXURONATE TRANSPORTER"/>
    <property type="match status" value="1"/>
</dbReference>
<dbReference type="PANTHER" id="PTHR11662">
    <property type="entry name" value="SOLUTE CARRIER FAMILY 17"/>
    <property type="match status" value="1"/>
</dbReference>
<dbReference type="Pfam" id="PF07690">
    <property type="entry name" value="MFS_1"/>
    <property type="match status" value="2"/>
</dbReference>
<dbReference type="SUPFAM" id="SSF103473">
    <property type="entry name" value="MFS general substrate transporter"/>
    <property type="match status" value="1"/>
</dbReference>
<dbReference type="PROSITE" id="PS50850">
    <property type="entry name" value="MFS"/>
    <property type="match status" value="1"/>
</dbReference>
<proteinExistence type="evidence at protein level"/>
<reference key="1">
    <citation type="submission" date="1992-09" db="EMBL/GenBank/DDBJ databases">
        <authorList>
            <person name="Mizobuchi K."/>
        </authorList>
    </citation>
    <scope>NUCLEOTIDE SEQUENCE [GENOMIC DNA]</scope>
    <source>
        <strain>K12 / W3110 / ATCC 27325 / DSM 5911</strain>
    </source>
</reference>
<reference key="2">
    <citation type="journal article" date="1997" name="Science">
        <title>The complete genome sequence of Escherichia coli K-12.</title>
        <authorList>
            <person name="Blattner F.R."/>
            <person name="Plunkett G. III"/>
            <person name="Bloch C.A."/>
            <person name="Perna N.T."/>
            <person name="Burland V."/>
            <person name="Riley M."/>
            <person name="Collado-Vides J."/>
            <person name="Glasner J.D."/>
            <person name="Rode C.K."/>
            <person name="Mayhew G.F."/>
            <person name="Gregor J."/>
            <person name="Davis N.W."/>
            <person name="Kirkpatrick H.A."/>
            <person name="Goeden M.A."/>
            <person name="Rose D.J."/>
            <person name="Mau B."/>
            <person name="Shao Y."/>
        </authorList>
    </citation>
    <scope>NUCLEOTIDE SEQUENCE [LARGE SCALE GENOMIC DNA]</scope>
    <source>
        <strain>K12 / MG1655 / ATCC 47076</strain>
    </source>
</reference>
<reference key="3">
    <citation type="journal article" date="2006" name="Mol. Syst. Biol.">
        <title>Highly accurate genome sequences of Escherichia coli K-12 strains MG1655 and W3110.</title>
        <authorList>
            <person name="Hayashi K."/>
            <person name="Morooka N."/>
            <person name="Yamamoto Y."/>
            <person name="Fujita K."/>
            <person name="Isono K."/>
            <person name="Choi S."/>
            <person name="Ohtsubo E."/>
            <person name="Baba T."/>
            <person name="Wanner B.L."/>
            <person name="Mori H."/>
            <person name="Horiuchi T."/>
        </authorList>
    </citation>
    <scope>NUCLEOTIDE SEQUENCE [LARGE SCALE GENOMIC DNA]</scope>
    <source>
        <strain>K12 / W3110 / ATCC 27325 / DSM 5911</strain>
    </source>
</reference>
<reference key="4">
    <citation type="journal article" date="1976" name="J. Bacteriol.">
        <title>Physiological and genetic regulation of the aldohexuronate transport system in Escherichia coli.</title>
        <authorList>
            <person name="Nemoz G."/>
            <person name="Robert-Baudouy J."/>
            <person name="Stoeber F."/>
        </authorList>
    </citation>
    <scope>FUNCTION</scope>
    <scope>INDUCTION</scope>
    <scope>DISRUPTION PHENOTYPE</scope>
    <source>
        <strain>K12</strain>
    </source>
</reference>
<reference key="5">
    <citation type="journal article" date="1983" name="Mol. Gen. Genet.">
        <title>Physical mapping of mutations in the structural gene encoding for the Escherichia coli aldohexuronate transport system.</title>
        <authorList>
            <person name="Mata-Gilsinger M."/>
            <person name="Ritzenthaler P."/>
        </authorList>
    </citation>
    <scope>FUNCTION</scope>
</reference>
<reference key="6">
    <citation type="journal article" date="2005" name="Science">
        <title>Global topology analysis of the Escherichia coli inner membrane proteome.</title>
        <authorList>
            <person name="Daley D.O."/>
            <person name="Rapp M."/>
            <person name="Granseth E."/>
            <person name="Melen K."/>
            <person name="Drew D."/>
            <person name="von Heijne G."/>
        </authorList>
    </citation>
    <scope>TOPOLOGY [LARGE SCALE ANALYSIS]</scope>
    <scope>SUBCELLULAR LOCATION</scope>
    <source>
        <strain>K12 / MG1655 / ATCC 47076</strain>
    </source>
</reference>
<reference key="7">
    <citation type="journal article" date="2009" name="J. Bacteriol.">
        <title>Involvement of the leucine response transcription factor LeuO in regulation of the genes for sulfa drug efflux.</title>
        <authorList>
            <person name="Shimada T."/>
            <person name="Yamamoto K."/>
            <person name="Ishihama A."/>
        </authorList>
    </citation>
    <scope>INDUCTION</scope>
    <source>
        <strain>K12 / BW25113</strain>
    </source>
</reference>
<reference key="8">
    <citation type="journal article" date="2020" name="Front. Microbiol.">
        <title>Short-term adaptation modulates anaerobic metabolic flux to succinate by activating ExuT, a novel D-glucose transporter in Escherichia coli.</title>
        <authorList>
            <person name="Kim H.J."/>
            <person name="Jeong H."/>
            <person name="Lee S.J."/>
        </authorList>
    </citation>
    <scope>FUNCTION AS A D-GLUCOSE TRANSPORTER</scope>
</reference>
<keyword id="KW-0997">Cell inner membrane</keyword>
<keyword id="KW-1003">Cell membrane</keyword>
<keyword id="KW-0472">Membrane</keyword>
<keyword id="KW-1185">Reference proteome</keyword>
<keyword id="KW-0732">Signal</keyword>
<keyword id="KW-0812">Transmembrane</keyword>
<keyword id="KW-1133">Transmembrane helix</keyword>
<keyword id="KW-0813">Transport</keyword>
<gene>
    <name evidence="7" type="primary">exuT</name>
    <name type="ordered locus">b3093</name>
    <name type="ordered locus">JW3064</name>
</gene>
<comment type="function">
    <text evidence="4 5 6">Transport of aldohexuronates such as D-glucuronate and D-galacturonate (PubMed:6343797, PubMed:783117). Under anaerobic conditions, can play a critical role as a D-glucose transporter in the absence of sugar-PTS system (PubMed:32038601).</text>
</comment>
<comment type="catalytic activity">
    <reaction evidence="10">
        <text>aldehydo-D-glucuronate(in) + H(+)(in) = aldehydo-D-glucuronate(out) + H(+)(out)</text>
        <dbReference type="Rhea" id="RHEA:28955"/>
        <dbReference type="ChEBI" id="CHEBI:15378"/>
        <dbReference type="ChEBI" id="CHEBI:142686"/>
    </reaction>
</comment>
<comment type="catalytic activity">
    <reaction evidence="10">
        <text>aldehydo-D-galacturonate(out) + H(+)(out) = aldehydo-D-galacturonate(in) + H(+)(in)</text>
        <dbReference type="Rhea" id="RHEA:29295"/>
        <dbReference type="ChEBI" id="CHEBI:12952"/>
        <dbReference type="ChEBI" id="CHEBI:15378"/>
    </reaction>
</comment>
<comment type="catalytic activity">
    <reaction evidence="9">
        <text>D-glucose(out) + H(+)(out) = D-glucose(in) + H(+)(in)</text>
        <dbReference type="Rhea" id="RHEA:69556"/>
        <dbReference type="ChEBI" id="CHEBI:4167"/>
        <dbReference type="ChEBI" id="CHEBI:15378"/>
    </reaction>
</comment>
<comment type="subcellular location">
    <subcellularLocation>
        <location evidence="2">Cell inner membrane</location>
        <topology evidence="1">Multi-pass membrane protein</topology>
    </subcellularLocation>
</comment>
<comment type="induction">
    <text evidence="3 6">Negatively controlled by ExuR (PubMed:783117). Repressed by H-NS (PubMed:19429622).</text>
</comment>
<comment type="disruption phenotype">
    <text evidence="6">Mutant is unable to grow on either glucuronate or galacturonate, but is able to grow on fructuronate or tagaturonate.</text>
</comment>
<comment type="similarity">
    <text evidence="8">Belongs to the major facilitator superfamily. Phthalate permease family.</text>
</comment>
<comment type="sequence caution" evidence="8">
    <conflict type="erroneous initiation">
        <sequence resource="EMBL-CDS" id="AAA57897"/>
    </conflict>
    <text>Extended N-terminus.</text>
</comment>
<comment type="sequence caution" evidence="8">
    <conflict type="erroneous initiation">
        <sequence resource="EMBL-CDS" id="BAA02588"/>
    </conflict>
    <text>Extended N-terminus.</text>
</comment>
<comment type="sequence caution" evidence="8">
    <conflict type="erroneous initiation">
        <sequence resource="EMBL-CDS" id="BAE77143"/>
    </conflict>
    <text>Extended N-terminus.</text>
</comment>
<feature type="signal peptide" evidence="1">
    <location>
        <begin position="1"/>
        <end position="31"/>
    </location>
</feature>
<feature type="chain" id="PRO_0000121379" description="Hexuronate transporter">
    <location>
        <begin position="32"/>
        <end position="432"/>
    </location>
</feature>
<feature type="topological domain" description="Periplasmic" evidence="8">
    <location>
        <begin position="33"/>
        <end position="48"/>
    </location>
</feature>
<feature type="transmembrane region" description="Helical" evidence="1">
    <location>
        <begin position="49"/>
        <end position="69"/>
    </location>
</feature>
<feature type="topological domain" description="Cytoplasmic" evidence="8">
    <location>
        <begin position="70"/>
        <end position="75"/>
    </location>
</feature>
<feature type="transmembrane region" description="Helical" evidence="1">
    <location>
        <begin position="76"/>
        <end position="96"/>
    </location>
</feature>
<feature type="topological domain" description="Periplasmic" evidence="8">
    <location>
        <begin position="97"/>
        <end position="99"/>
    </location>
</feature>
<feature type="transmembrane region" description="Helical" evidence="1">
    <location>
        <begin position="100"/>
        <end position="120"/>
    </location>
</feature>
<feature type="topological domain" description="Cytoplasmic" evidence="8">
    <location>
        <begin position="121"/>
        <end position="138"/>
    </location>
</feature>
<feature type="transmembrane region" description="Helical" evidence="1">
    <location>
        <begin position="139"/>
        <end position="159"/>
    </location>
</feature>
<feature type="topological domain" description="Periplasmic" evidence="8">
    <location>
        <begin position="160"/>
        <end position="164"/>
    </location>
</feature>
<feature type="transmembrane region" description="Helical" evidence="1">
    <location>
        <begin position="165"/>
        <end position="185"/>
    </location>
</feature>
<feature type="topological domain" description="Cytoplasmic" evidence="8">
    <location>
        <begin position="186"/>
        <end position="236"/>
    </location>
</feature>
<feature type="transmembrane region" description="Helical" evidence="1">
    <location>
        <begin position="237"/>
        <end position="257"/>
    </location>
</feature>
<feature type="topological domain" description="Periplasmic" evidence="8">
    <location>
        <begin position="258"/>
        <end position="264"/>
    </location>
</feature>
<feature type="transmembrane region" description="Helical" evidence="1">
    <location>
        <begin position="265"/>
        <end position="285"/>
    </location>
</feature>
<feature type="topological domain" description="Cytoplasmic" evidence="8">
    <location>
        <begin position="286"/>
        <end position="293"/>
    </location>
</feature>
<feature type="transmembrane region" description="Helical" evidence="1">
    <location>
        <begin position="294"/>
        <end position="314"/>
    </location>
</feature>
<feature type="topological domain" description="Periplasmic" evidence="8">
    <location>
        <begin position="315"/>
        <end position="317"/>
    </location>
</feature>
<feature type="transmembrane region" description="Helical" evidence="1">
    <location>
        <begin position="318"/>
        <end position="338"/>
    </location>
</feature>
<feature type="topological domain" description="Cytoplasmic" evidence="8">
    <location>
        <begin position="339"/>
        <end position="369"/>
    </location>
</feature>
<feature type="transmembrane region" description="Helical" evidence="1">
    <location>
        <begin position="370"/>
        <end position="390"/>
    </location>
</feature>
<feature type="topological domain" description="Periplasmic" evidence="8">
    <location>
        <position position="391"/>
    </location>
</feature>
<feature type="transmembrane region" description="Helical" evidence="1">
    <location>
        <begin position="392"/>
        <end position="412"/>
    </location>
</feature>
<feature type="topological domain" description="Cytoplasmic" evidence="2">
    <location>
        <begin position="413"/>
        <end position="432"/>
    </location>
</feature>
<accession>P0AA78</accession>
<accession>P42609</accession>
<accession>Q2M9B3</accession>
<evidence type="ECO:0000255" key="1"/>
<evidence type="ECO:0000269" key="2">
    <source>
    </source>
</evidence>
<evidence type="ECO:0000269" key="3">
    <source>
    </source>
</evidence>
<evidence type="ECO:0000269" key="4">
    <source>
    </source>
</evidence>
<evidence type="ECO:0000269" key="5">
    <source>
    </source>
</evidence>
<evidence type="ECO:0000269" key="6">
    <source>
    </source>
</evidence>
<evidence type="ECO:0000303" key="7">
    <source>
    </source>
</evidence>
<evidence type="ECO:0000305" key="8"/>
<evidence type="ECO:0000305" key="9">
    <source>
    </source>
</evidence>
<evidence type="ECO:0000305" key="10">
    <source>
    </source>
</evidence>
<protein>
    <recommendedName>
        <fullName evidence="8">Hexuronate transporter</fullName>
    </recommendedName>
    <alternativeName>
        <fullName evidence="7">Aldohexuronate transport system</fullName>
    </alternativeName>
</protein>